<gene>
    <name type="primary">sch3</name>
</gene>
<evidence type="ECO:0000255" key="1">
    <source>
        <dbReference type="PROSITE-ProRule" id="PRU00258"/>
    </source>
</evidence>
<evidence type="ECO:0000305" key="2"/>
<keyword id="KW-0596">Phosphopantetheine</keyword>
<keyword id="KW-0597">Phosphoprotein</keyword>
<name>ACPX_STRHA</name>
<protein>
    <recommendedName>
        <fullName>Probable acyl carrier protein</fullName>
        <shortName>ACP</shortName>
    </recommendedName>
</protein>
<proteinExistence type="inferred from homology"/>
<comment type="function">
    <text>Involved in developmentally regulated synthesis of a compound biosynthetically related to polyketide antibiotics which is essential for spore color in Streptomyces halstedii.</text>
</comment>
<comment type="PTM">
    <text evidence="2">4'-phosphopantetheine is transferred from CoA to a specific serine of the apo-ACP-like protein.</text>
</comment>
<accession>Q05363</accession>
<sequence>MTDMTERVGTQVTFEELSALMKRTAGVHVEPPDLRARAEEGFDGFGLDSLGLLGIVAELEKKHGVGLPEQVERCKTPAEFLAQVNATLRTAV</sequence>
<reference key="1">
    <citation type="journal article" date="1993" name="Gene">
        <title>Hybridization and DNA sequence analyses suggest an early evolutionary divergence of related biosynthetic gene sets encoding polyketide antibiotics and spore pigments in Streptomyces spp.</title>
        <authorList>
            <person name="Blanco G."/>
            <person name="Brian P."/>
            <person name="Pereda A."/>
            <person name="Mendez C."/>
            <person name="Salas J.A."/>
            <person name="Chater K.F."/>
        </authorList>
    </citation>
    <scope>NUCLEOTIDE SEQUENCE [GENOMIC DNA]</scope>
    <source>
        <strain>NRRL 2381</strain>
    </source>
</reference>
<dbReference type="EMBL" id="L05390">
    <property type="protein sequence ID" value="AAA02835.1"/>
    <property type="molecule type" value="Genomic_DNA"/>
</dbReference>
<dbReference type="PIR" id="JN0827">
    <property type="entry name" value="JN0827"/>
</dbReference>
<dbReference type="SMR" id="Q05363"/>
<dbReference type="Gene3D" id="1.10.1200.10">
    <property type="entry name" value="ACP-like"/>
    <property type="match status" value="1"/>
</dbReference>
<dbReference type="InterPro" id="IPR036736">
    <property type="entry name" value="ACP-like_sf"/>
</dbReference>
<dbReference type="InterPro" id="IPR009081">
    <property type="entry name" value="PP-bd_ACP"/>
</dbReference>
<dbReference type="InterPro" id="IPR006162">
    <property type="entry name" value="Ppantetheine_attach_site"/>
</dbReference>
<dbReference type="Pfam" id="PF00550">
    <property type="entry name" value="PP-binding"/>
    <property type="match status" value="1"/>
</dbReference>
<dbReference type="SUPFAM" id="SSF47336">
    <property type="entry name" value="ACP-like"/>
    <property type="match status" value="1"/>
</dbReference>
<dbReference type="PROSITE" id="PS50075">
    <property type="entry name" value="CARRIER"/>
    <property type="match status" value="1"/>
</dbReference>
<dbReference type="PROSITE" id="PS00012">
    <property type="entry name" value="PHOSPHOPANTETHEINE"/>
    <property type="match status" value="1"/>
</dbReference>
<feature type="chain" id="PRO_0000180257" description="Probable acyl carrier protein">
    <location>
        <begin position="1"/>
        <end position="92"/>
    </location>
</feature>
<feature type="domain" description="Carrier" evidence="1">
    <location>
        <begin position="11"/>
        <end position="92"/>
    </location>
</feature>
<feature type="modified residue" description="O-(pantetheine 4'-phosphoryl)serine" evidence="1">
    <location>
        <position position="49"/>
    </location>
</feature>
<organism>
    <name type="scientific">Streptomyces halstedii</name>
    <dbReference type="NCBI Taxonomy" id="1944"/>
    <lineage>
        <taxon>Bacteria</taxon>
        <taxon>Bacillati</taxon>
        <taxon>Actinomycetota</taxon>
        <taxon>Actinomycetes</taxon>
        <taxon>Kitasatosporales</taxon>
        <taxon>Streptomycetaceae</taxon>
        <taxon>Streptomyces</taxon>
    </lineage>
</organism>